<keyword id="KW-0025">Alternative splicing</keyword>
<keyword id="KW-0106">Calcium</keyword>
<keyword id="KW-0903">Direct protein sequencing</keyword>
<keyword id="KW-1015">Disulfide bond</keyword>
<keyword id="KW-0245">EGF-like domain</keyword>
<keyword id="KW-0272">Extracellular matrix</keyword>
<keyword id="KW-0325">Glycoprotein</keyword>
<keyword id="KW-0393">Immunoglobulin domain</keyword>
<keyword id="KW-0430">Lectin</keyword>
<keyword id="KW-0479">Metal-binding</keyword>
<keyword id="KW-0654">Proteoglycan</keyword>
<keyword id="KW-1185">Reference proteome</keyword>
<keyword id="KW-0677">Repeat</keyword>
<keyword id="KW-0964">Secreted</keyword>
<keyword id="KW-0732">Signal</keyword>
<keyword id="KW-0768">Sushi</keyword>
<reference key="1">
    <citation type="journal article" date="1993" name="J. Biol. Chem.">
        <title>cDNA cloning of chick cartilage chondroitin sulfate (aggrecan) core protein and identification of a stop codon in the aggrecan gene associated with the chondrodystrophy, nanomelia.</title>
        <authorList>
            <person name="Li H."/>
            <person name="Schwartz N.B."/>
            <person name="Vertel B.M."/>
        </authorList>
    </citation>
    <scope>NUCLEOTIDE SEQUENCE [MRNA] (ISOFORM 1)</scope>
    <source>
        <strain>White leghorn</strain>
        <tissue>Embryo</tissue>
    </source>
</reference>
<reference key="2">
    <citation type="journal article" date="1992" name="Biochem. J.">
        <title>Molecular cloning of chicken aggrecan. Structural analyses.</title>
        <authorList>
            <person name="Chandrasekaran L."/>
            <person name="Tanzer M.L."/>
        </authorList>
    </citation>
    <scope>NUCLEOTIDE SEQUENCE [MRNA] (ISOFORM 2)</scope>
    <source>
        <tissue>Cartilage</tissue>
    </source>
</reference>
<reference key="3">
    <citation type="journal article" date="1993" name="Biochem. J.">
        <authorList>
            <person name="Chandrasekaran L."/>
            <person name="Tanzer M.L."/>
        </authorList>
    </citation>
    <scope>ERRATUM OF PUBMED:1339285</scope>
</reference>
<reference key="4">
    <citation type="journal article" date="1990" name="J. Biol. Chem.">
        <title>Chick cartilage chondroitin sulfate proteoglycan core protein. II. Nucleotide sequence of cDNA clone and localization of the S103L epitope.</title>
        <authorList>
            <person name="Krueger R.C. Jr."/>
            <person name="Fields T.A."/>
            <person name="Mensch J.R. Jr."/>
            <person name="Schwartz N.B."/>
        </authorList>
    </citation>
    <scope>NUCLEOTIDE SEQUENCE [MRNA] OF 1042-1559 (ISOFORMS 1/2)</scope>
    <source>
        <tissue>Embryo</tissue>
    </source>
</reference>
<reference key="5">
    <citation type="journal article" date="1994" name="Matrix Biol.">
        <title>Molecular basis of nanomelia, a heritable chondrodystrophy of chicken.</title>
        <authorList>
            <person name="Primorac D."/>
            <person name="Stover M.L."/>
            <person name="Clark S.H."/>
            <person name="Rowe D.W."/>
        </authorList>
    </citation>
    <scope>NUCLEOTIDE SEQUENCE [GENOMIC DNA] OF 1492-1610</scope>
    <source>
        <strain>White leghorn</strain>
        <tissue>Chondrocyte</tissue>
    </source>
</reference>
<reference key="6">
    <citation type="journal article" date="1986" name="Proc. Natl. Acad. Sci. U.S.A.">
        <title>Cloning and sequence analysis of a partial cDNA for chicken cartilage proteoglycan core protein.</title>
        <authorList>
            <person name="Sai S."/>
            <person name="Tanaka T."/>
            <person name="Kosher R.A."/>
            <person name="Tanzer M.L."/>
        </authorList>
    </citation>
    <scope>NUCLEOTIDE SEQUENCE [MRNA] OF 1693-2109 (ISOFORM 2)</scope>
</reference>
<reference key="7">
    <citation type="journal article" date="1988" name="J. Biol. Chem.">
        <title>Partial structure of the gene for chicken cartilage proteoglycan core protein.</title>
        <authorList>
            <person name="Tanaka T."/>
            <person name="Har-El R."/>
            <person name="Tanzer M.L."/>
        </authorList>
    </citation>
    <scope>NUCLEOTIDE SEQUENCE [GENOMIC DNA] OF 1894-2109</scope>
</reference>
<reference key="8">
    <citation type="journal article" date="1990" name="J. Biol. Chem.">
        <title>Chick cartilage chondroitin sulfate proteoglycan core protein. I. Generation and characterization of peptides and specificity for glycosaminoglycan attachment.</title>
        <authorList>
            <person name="Krueger R.C. Jr."/>
            <person name="Fields T.A."/>
            <person name="Hildreth J. IV"/>
            <person name="Schwartz N.B."/>
        </authorList>
    </citation>
    <scope>PROTEIN SEQUENCE OF 718-736; 998-1023 AND 1247-1275</scope>
    <scope>GLYCOSYLATION AT THR-728; SER-1006; SER-1010; SER-1016; SER-1249; SER-1253; SER-1259; SER-1263 AND SER-1269</scope>
</reference>
<reference key="9">
    <citation type="journal article" date="1992" name="Dev. Dyn.">
        <title>Cartilage matrix protein is a component of the collagen fibril of cartilage.</title>
        <authorList>
            <person name="Winterbottom N."/>
            <person name="Tondravi M.M."/>
            <person name="Harrington T.L."/>
            <person name="Klier F.G."/>
            <person name="Vertel B.M."/>
            <person name="Goetinck P.F."/>
        </authorList>
    </citation>
    <scope>SUBCELLULAR LOCATION</scope>
    <scope>TISSUE SPECIFICITY</scope>
</reference>
<proteinExistence type="evidence at protein level"/>
<gene>
    <name type="primary">ACAN</name>
    <name type="synonym">AGC1</name>
</gene>
<sequence>MTTLLLVFVCLQAITTAASAELSDSSDGLEVKIPEQSPLRVVLGSSLNIPCYFNIPEEEDTNALLTPRIKWSKLSNGTEIVLLVATGGKIRLNAEYREVISLPNYPAIPTDATLEIKALRSNHTGIYRCEVMYGIEDRQDTIEVLVKGVVFHYRAISTRYTLNFERAKQACIQNSAVIATPEQLQAAYEDGYEQCDAGWLADQTVRYPIHLPRERCYGDKDEFPGVRTYGVRETDETYDVYCYAEQMQGKVFYATSPEKFTFQEAFDKCHSLGARLATTGELYLAWKDGMDMCSAGWLADRSVRYPISRARPNCGGNLVGVRTVYLNPANQTGYPHPSSRYDAICYSGDDFEALVPGLFTDEVGTELGSAFTIQTVTQTEVELPLPRNVTEEEARGSIATLEPMEITATATELYEAFTVLPDLFATSVTVETASPREENVTREEITGIWAVPEEVTTSVSGTAFTTGMAEVSSVEEAIAVTATPGLESASPFTIEDHLVQVTAAPDVALLPRQPISPTGVVFHYRAATSRYAFSFIQAQQACLENNAVIATPEQLQAAYEAGFDQCDAGWLRDQTVRYPIVNPRSNCVGDKESSPGVRSYGMRPASETYDVYCYIDRLKGEVFFATQPEQFTFQEAQLYCESQNATLASAGQLHAAWKQGLDRCYPGWLADGSLRYPIVSPRPACGGDAPGVRTIYQHHNQTGFPDPLSRHHAFCFRALPSVVEEGVTSLFEEEVMVTQLIPGVEGIPSGEETTVETELSSEPENQTAQGTEVFPTDVSLLSARPSAFPPATVIPEETSTNASIPEVSGEFPESGEHPTSGEPSASGAPDTSGEPTSVGFELSGEQSGIGESGLPSVDLQSSGFVPGESGLPSGDVSGLPSGIVDISGLPSAEEEVTVSVSRIPEVSGMPSGAESSGLHSGFSGEISGTELISGLPSGEESGLASGFPTISLVDSTLVEVVTAAPGRQEEGKGSIGVSGEEELSGFPSAEWDSSGARGLPSGAETSGEQSGVPELSGEHSGVPGLSGEAFEVPELSGEHSGVTELSGEHSGLPELSGEPFGVPELSGFPSGLDISGEPSGAPEVSGPVDVSGLTSGVDGSGEVSGVTFISTSLQEVTTPSVAEAEAKEILEISGLPSGETSGMVSGSLDVSGQPSGHIGFGGSASGVLEMSGFPGGAVESSGEASGVEVTSGLASGEESGLTSGFPTVSLVDTTLVEVVTQTSVAQEVGEGPSGMIEISGFLSGDRGVSGEGSGAVQSSGLPSGTGDFSGEPSGIPYFSGDISGATDLSGQPSAVTDISGEDSGLPEVTLVTSDLVEVVTRPTVSQELGGETAVTFPYVFGPSGEGSASGDLSGGASAEGGIETSTAYEISGESSAFPETSIETSTDQEISGEASAYPEISVETSTHLETSGETSAYPEISTETSTIQEVSGETSAFPEISTETSTIQEISGETSAFPEIRIETSTFQEISGETSAFPEIRIETSTSQEARGETSAFPEITIEASTVHETSGETSAFPEISIETSTVHETSGETSAFPEISIETSTVHEISGESSAFPEIRIETSTSQEARGETSAFPEITIEASTIQEISGETSAFPEISIETSTVREISGETSAFPEIRIETSTSQEARGETSALPEITIETSTVHETSGEASAFPEISIETSTRQEARSEASAYPEVSIEASTTQEVSGESSAFPEISVETSTSQEARGETSAFPEIGIETSTAHEGSGETPGLPAVSTDTAATSLASGEPSGAPEKETPDTTSHLITGVSGETSVPDAVISTSAPDVELAQEPRNTEETQLEIEPSTPAASGQETETAAVLDNPHLPATATAALHPASQEAVDALGPTTEDTDECHSSPCLNGATCVDGIDSFKCLCLPSYGGDLCEIDLANCEEGWIKFQGHCYRHFEERETWMDAESRCREHQAHLSSIITPEEQEFVNSHAQDYQWIGLSDRAVENDFRWSDGHSLQFENWRPNQPDNFFFAGEDCVVMIWHEQGEWNDVPCNYHLPFTCKKGTVACGDPPVVENARTFGRKKDRYEINSLVRYQCDHGYIQRHVPTIRCQPNGHWEEPRISCTNPSSYQRRLYKRSPRSRLRPGVVHRPTH</sequence>
<accession>P07898</accession>
<accession>Q90810</accession>
<accession>Q90820</accession>
<accession>Q90991</accession>
<accession>Q91047</accession>
<dbReference type="EMBL" id="L21913">
    <property type="protein sequence ID" value="AAB19128.1"/>
    <property type="molecule type" value="mRNA"/>
</dbReference>
<dbReference type="EMBL" id="M88101">
    <property type="status" value="NOT_ANNOTATED_CDS"/>
    <property type="molecule type" value="mRNA"/>
</dbReference>
<dbReference type="EMBL" id="M38187">
    <property type="protein sequence ID" value="AAA48731.1"/>
    <property type="molecule type" value="mRNA"/>
</dbReference>
<dbReference type="EMBL" id="S74657">
    <property type="protein sequence ID" value="AAC60751.1"/>
    <property type="molecule type" value="Genomic_DNA"/>
</dbReference>
<dbReference type="EMBL" id="S74656">
    <property type="protein sequence ID" value="AAC60751.1"/>
    <property type="status" value="JOINED"/>
    <property type="molecule type" value="Genomic_DNA"/>
</dbReference>
<dbReference type="EMBL" id="M13993">
    <property type="protein sequence ID" value="AAA48720.1"/>
    <property type="molecule type" value="mRNA"/>
</dbReference>
<dbReference type="EMBL" id="J04028">
    <property type="protein sequence ID" value="AAA48719.1"/>
    <property type="molecule type" value="Genomic_DNA"/>
</dbReference>
<dbReference type="PIR" id="I50421">
    <property type="entry name" value="I50421"/>
</dbReference>
<dbReference type="SMR" id="P07898"/>
<dbReference type="FunCoup" id="P07898">
    <property type="interactions" value="26"/>
</dbReference>
<dbReference type="STRING" id="9031.ENSGALP00000010867"/>
<dbReference type="GlyCosmos" id="P07898">
    <property type="glycosylation" value="20 sites, No reported glycans"/>
</dbReference>
<dbReference type="GlyGen" id="P07898">
    <property type="glycosylation" value="24 sites"/>
</dbReference>
<dbReference type="iPTMnet" id="P07898"/>
<dbReference type="PaxDb" id="9031-ENSGALP00000037775"/>
<dbReference type="VEuPathDB" id="HostDB:geneid_395798"/>
<dbReference type="eggNOG" id="ENOG502QUX8">
    <property type="taxonomic scope" value="Eukaryota"/>
</dbReference>
<dbReference type="InParanoid" id="P07898"/>
<dbReference type="OrthoDB" id="5860362at2759"/>
<dbReference type="PhylomeDB" id="P07898"/>
<dbReference type="Proteomes" id="UP000000539">
    <property type="component" value="Unassembled WGS sequence"/>
</dbReference>
<dbReference type="GO" id="GO:0005615">
    <property type="term" value="C:extracellular space"/>
    <property type="evidence" value="ECO:0000318"/>
    <property type="project" value="GO_Central"/>
</dbReference>
<dbReference type="GO" id="GO:0072534">
    <property type="term" value="C:perineuronal net"/>
    <property type="evidence" value="ECO:0000318"/>
    <property type="project" value="GO_Central"/>
</dbReference>
<dbReference type="GO" id="GO:0045202">
    <property type="term" value="C:synapse"/>
    <property type="evidence" value="ECO:0000318"/>
    <property type="project" value="GO_Central"/>
</dbReference>
<dbReference type="GO" id="GO:0005509">
    <property type="term" value="F:calcium ion binding"/>
    <property type="evidence" value="ECO:0007669"/>
    <property type="project" value="InterPro"/>
</dbReference>
<dbReference type="GO" id="GO:0030246">
    <property type="term" value="F:carbohydrate binding"/>
    <property type="evidence" value="ECO:0007669"/>
    <property type="project" value="UniProtKB-KW"/>
</dbReference>
<dbReference type="GO" id="GO:0005540">
    <property type="term" value="F:hyaluronic acid binding"/>
    <property type="evidence" value="ECO:0007669"/>
    <property type="project" value="InterPro"/>
</dbReference>
<dbReference type="GO" id="GO:0007155">
    <property type="term" value="P:cell adhesion"/>
    <property type="evidence" value="ECO:0007669"/>
    <property type="project" value="InterPro"/>
</dbReference>
<dbReference type="GO" id="GO:0007417">
    <property type="term" value="P:central nervous system development"/>
    <property type="evidence" value="ECO:0000318"/>
    <property type="project" value="GO_Central"/>
</dbReference>
<dbReference type="GO" id="GO:0001501">
    <property type="term" value="P:skeletal system development"/>
    <property type="evidence" value="ECO:0000318"/>
    <property type="project" value="GO_Central"/>
</dbReference>
<dbReference type="CDD" id="cd00033">
    <property type="entry name" value="CCP"/>
    <property type="match status" value="1"/>
</dbReference>
<dbReference type="CDD" id="cd03588">
    <property type="entry name" value="CLECT_CSPGs"/>
    <property type="match status" value="1"/>
</dbReference>
<dbReference type="CDD" id="cd00054">
    <property type="entry name" value="EGF_CA"/>
    <property type="match status" value="1"/>
</dbReference>
<dbReference type="CDD" id="cd05900">
    <property type="entry name" value="Ig_Aggrecan"/>
    <property type="match status" value="1"/>
</dbReference>
<dbReference type="CDD" id="cd03517">
    <property type="entry name" value="Link_domain_CSPGs_modules_1_3"/>
    <property type="match status" value="2"/>
</dbReference>
<dbReference type="CDD" id="cd03520">
    <property type="entry name" value="Link_domain_CSPGs_modules_2_4"/>
    <property type="match status" value="2"/>
</dbReference>
<dbReference type="FunFam" id="2.60.40.10:FF:001192">
    <property type="entry name" value="Aggrecan core protein"/>
    <property type="match status" value="1"/>
</dbReference>
<dbReference type="FunFam" id="3.10.100.10:FF:000009">
    <property type="entry name" value="Aggrecan core protein"/>
    <property type="match status" value="1"/>
</dbReference>
<dbReference type="FunFam" id="3.10.100.10:FF:000011">
    <property type="entry name" value="Aggrecan core protein"/>
    <property type="match status" value="1"/>
</dbReference>
<dbReference type="FunFam" id="3.10.100.10:FF:000002">
    <property type="entry name" value="Hyaluronan proteoglycan link protein 1"/>
    <property type="match status" value="2"/>
</dbReference>
<dbReference type="FunFam" id="2.10.70.10:FF:000003">
    <property type="entry name" value="Versican core protein"/>
    <property type="match status" value="1"/>
</dbReference>
<dbReference type="FunFam" id="3.10.100.10:FF:000003">
    <property type="entry name" value="Versican core protein"/>
    <property type="match status" value="1"/>
</dbReference>
<dbReference type="FunFam" id="2.10.25.10:FF:000006">
    <property type="entry name" value="Versican core protein-like isoform 1"/>
    <property type="match status" value="1"/>
</dbReference>
<dbReference type="Gene3D" id="2.10.70.10">
    <property type="entry name" value="Complement Module, domain 1"/>
    <property type="match status" value="1"/>
</dbReference>
<dbReference type="Gene3D" id="2.60.40.10">
    <property type="entry name" value="Immunoglobulins"/>
    <property type="match status" value="1"/>
</dbReference>
<dbReference type="Gene3D" id="2.10.25.10">
    <property type="entry name" value="Laminin"/>
    <property type="match status" value="1"/>
</dbReference>
<dbReference type="Gene3D" id="3.10.100.10">
    <property type="entry name" value="Mannose-Binding Protein A, subunit A"/>
    <property type="match status" value="5"/>
</dbReference>
<dbReference type="InterPro" id="IPR001304">
    <property type="entry name" value="C-type_lectin-like"/>
</dbReference>
<dbReference type="InterPro" id="IPR016186">
    <property type="entry name" value="C-type_lectin-like/link_sf"/>
</dbReference>
<dbReference type="InterPro" id="IPR018378">
    <property type="entry name" value="C-type_lectin_CS"/>
</dbReference>
<dbReference type="InterPro" id="IPR033987">
    <property type="entry name" value="CSPG_CTLD"/>
</dbReference>
<dbReference type="InterPro" id="IPR016187">
    <property type="entry name" value="CTDL_fold"/>
</dbReference>
<dbReference type="InterPro" id="IPR001881">
    <property type="entry name" value="EGF-like_Ca-bd_dom"/>
</dbReference>
<dbReference type="InterPro" id="IPR000742">
    <property type="entry name" value="EGF-like_dom"/>
</dbReference>
<dbReference type="InterPro" id="IPR000152">
    <property type="entry name" value="EGF-type_Asp/Asn_hydroxyl_site"/>
</dbReference>
<dbReference type="InterPro" id="IPR018097">
    <property type="entry name" value="EGF_Ca-bd_CS"/>
</dbReference>
<dbReference type="InterPro" id="IPR050691">
    <property type="entry name" value="Hyaluronan_bind_Proteoglycan"/>
</dbReference>
<dbReference type="InterPro" id="IPR007110">
    <property type="entry name" value="Ig-like_dom"/>
</dbReference>
<dbReference type="InterPro" id="IPR036179">
    <property type="entry name" value="Ig-like_dom_sf"/>
</dbReference>
<dbReference type="InterPro" id="IPR013783">
    <property type="entry name" value="Ig-like_fold"/>
</dbReference>
<dbReference type="InterPro" id="IPR003599">
    <property type="entry name" value="Ig_sub"/>
</dbReference>
<dbReference type="InterPro" id="IPR013106">
    <property type="entry name" value="Ig_V-set"/>
</dbReference>
<dbReference type="InterPro" id="IPR000538">
    <property type="entry name" value="Link_dom"/>
</dbReference>
<dbReference type="InterPro" id="IPR035976">
    <property type="entry name" value="Sushi/SCR/CCP_sf"/>
</dbReference>
<dbReference type="InterPro" id="IPR000436">
    <property type="entry name" value="Sushi_SCR_CCP_dom"/>
</dbReference>
<dbReference type="PANTHER" id="PTHR22804:SF42">
    <property type="entry name" value="AGGRECAN CORE PROTEIN"/>
    <property type="match status" value="1"/>
</dbReference>
<dbReference type="PANTHER" id="PTHR22804">
    <property type="entry name" value="AGGRECAN/VERSICAN PROTEOGLYCAN"/>
    <property type="match status" value="1"/>
</dbReference>
<dbReference type="Pfam" id="PF00008">
    <property type="entry name" value="EGF"/>
    <property type="match status" value="1"/>
</dbReference>
<dbReference type="Pfam" id="PF00059">
    <property type="entry name" value="Lectin_C"/>
    <property type="match status" value="1"/>
</dbReference>
<dbReference type="Pfam" id="PF00084">
    <property type="entry name" value="Sushi"/>
    <property type="match status" value="1"/>
</dbReference>
<dbReference type="Pfam" id="PF07686">
    <property type="entry name" value="V-set"/>
    <property type="match status" value="1"/>
</dbReference>
<dbReference type="Pfam" id="PF00193">
    <property type="entry name" value="Xlink"/>
    <property type="match status" value="4"/>
</dbReference>
<dbReference type="PRINTS" id="PR01265">
    <property type="entry name" value="LINKMODULE"/>
</dbReference>
<dbReference type="SMART" id="SM00032">
    <property type="entry name" value="CCP"/>
    <property type="match status" value="1"/>
</dbReference>
<dbReference type="SMART" id="SM00034">
    <property type="entry name" value="CLECT"/>
    <property type="match status" value="1"/>
</dbReference>
<dbReference type="SMART" id="SM00181">
    <property type="entry name" value="EGF"/>
    <property type="match status" value="1"/>
</dbReference>
<dbReference type="SMART" id="SM00179">
    <property type="entry name" value="EGF_CA"/>
    <property type="match status" value="1"/>
</dbReference>
<dbReference type="SMART" id="SM00409">
    <property type="entry name" value="IG"/>
    <property type="match status" value="1"/>
</dbReference>
<dbReference type="SMART" id="SM00445">
    <property type="entry name" value="LINK"/>
    <property type="match status" value="4"/>
</dbReference>
<dbReference type="SUPFAM" id="SSF56436">
    <property type="entry name" value="C-type lectin-like"/>
    <property type="match status" value="5"/>
</dbReference>
<dbReference type="SUPFAM" id="SSF57535">
    <property type="entry name" value="Complement control module/SCR domain"/>
    <property type="match status" value="1"/>
</dbReference>
<dbReference type="SUPFAM" id="SSF48726">
    <property type="entry name" value="Immunoglobulin"/>
    <property type="match status" value="1"/>
</dbReference>
<dbReference type="PROSITE" id="PS00010">
    <property type="entry name" value="ASX_HYDROXYL"/>
    <property type="match status" value="1"/>
</dbReference>
<dbReference type="PROSITE" id="PS00615">
    <property type="entry name" value="C_TYPE_LECTIN_1"/>
    <property type="match status" value="1"/>
</dbReference>
<dbReference type="PROSITE" id="PS50041">
    <property type="entry name" value="C_TYPE_LECTIN_2"/>
    <property type="match status" value="1"/>
</dbReference>
<dbReference type="PROSITE" id="PS00022">
    <property type="entry name" value="EGF_1"/>
    <property type="match status" value="1"/>
</dbReference>
<dbReference type="PROSITE" id="PS50026">
    <property type="entry name" value="EGF_3"/>
    <property type="match status" value="1"/>
</dbReference>
<dbReference type="PROSITE" id="PS01187">
    <property type="entry name" value="EGF_CA"/>
    <property type="match status" value="1"/>
</dbReference>
<dbReference type="PROSITE" id="PS50835">
    <property type="entry name" value="IG_LIKE"/>
    <property type="match status" value="1"/>
</dbReference>
<dbReference type="PROSITE" id="PS01241">
    <property type="entry name" value="LINK_1"/>
    <property type="match status" value="4"/>
</dbReference>
<dbReference type="PROSITE" id="PS50963">
    <property type="entry name" value="LINK_2"/>
    <property type="match status" value="4"/>
</dbReference>
<dbReference type="PROSITE" id="PS50923">
    <property type="entry name" value="SUSHI"/>
    <property type="match status" value="1"/>
</dbReference>
<comment type="function">
    <text>This proteoglycan is a major component of extracellular matrix of cartilagenous tissues. A major function of this protein is to resist compression in cartilage. It binds avidly to hyaluronic acid via an N-terminal globular region. May play a regulatory role in the matrix assembly of the cartilage.</text>
</comment>
<comment type="subcellular location">
    <subcellularLocation>
        <location evidence="10">Secreted</location>
        <location evidence="10">Extracellular space</location>
        <location evidence="10">Extracellular matrix</location>
    </subcellularLocation>
</comment>
<comment type="alternative products">
    <event type="alternative splicing"/>
    <isoform>
        <id>P07898-1</id>
        <name>1</name>
        <sequence type="displayed"/>
    </isoform>
    <isoform>
        <id>P07898-2</id>
        <name>2</name>
        <sequence type="described" ref="VSP_003073"/>
    </isoform>
</comment>
<comment type="tissue specificity">
    <text evidence="10">Expressed in chondrocytes (at protein level).</text>
</comment>
<comment type="domain">
    <text>Two globular domains, G1 and G2, comprise the N-terminus of the proteoglycan, while another globular region, G3, makes up the C-terminus. G1 contains Link domains and thus consists of three disulfide-bonded loop structures designated as the A, B, B' motifs. G2 is similar to G1. The keratan sulfate (KS) and the chondroitin sulfate (CS) attachment domains lie between G2 and G3.</text>
</comment>
<comment type="PTM">
    <text evidence="11">Contains mostly chondroitin sulfate, but also keratan sulfate chains, N-linked and O-linked oligosaccharides.</text>
</comment>
<comment type="disease">
    <text>Defects in ACAN are the cause of nanomelia, a lethal connective tissue disorder affecting cartilage development (chondrodystrophy) characterized by shortened and malformed limbs. Aggrecan is truncated at its C-terminus in the CS-2 binding domain and is not anymore secreted from the chondrocytes.</text>
</comment>
<comment type="similarity">
    <text evidence="14">Belongs to the aggrecan/versican proteoglycan family.</text>
</comment>
<protein>
    <recommendedName>
        <fullName>Aggrecan core protein</fullName>
    </recommendedName>
    <alternativeName>
        <fullName>Cartilage-specific proteoglycan core protein</fullName>
        <shortName>CSPCP</shortName>
    </alternativeName>
</protein>
<name>PGCA_CHICK</name>
<organism>
    <name type="scientific">Gallus gallus</name>
    <name type="common">Chicken</name>
    <dbReference type="NCBI Taxonomy" id="9031"/>
    <lineage>
        <taxon>Eukaryota</taxon>
        <taxon>Metazoa</taxon>
        <taxon>Chordata</taxon>
        <taxon>Craniata</taxon>
        <taxon>Vertebrata</taxon>
        <taxon>Euteleostomi</taxon>
        <taxon>Archelosauria</taxon>
        <taxon>Archosauria</taxon>
        <taxon>Dinosauria</taxon>
        <taxon>Saurischia</taxon>
        <taxon>Theropoda</taxon>
        <taxon>Coelurosauria</taxon>
        <taxon>Aves</taxon>
        <taxon>Neognathae</taxon>
        <taxon>Galloanserae</taxon>
        <taxon>Galliformes</taxon>
        <taxon>Phasianidae</taxon>
        <taxon>Phasianinae</taxon>
        <taxon>Gallus</taxon>
    </lineage>
</organism>
<evidence type="ECO:0000250" key="1">
    <source>
        <dbReference type="UniProtKB" id="P07897"/>
    </source>
</evidence>
<evidence type="ECO:0000250" key="2">
    <source>
        <dbReference type="UniProtKB" id="P16112"/>
    </source>
</evidence>
<evidence type="ECO:0000255" key="3"/>
<evidence type="ECO:0000255" key="4">
    <source>
        <dbReference type="PROSITE-ProRule" id="PRU00040"/>
    </source>
</evidence>
<evidence type="ECO:0000255" key="5">
    <source>
        <dbReference type="PROSITE-ProRule" id="PRU00076"/>
    </source>
</evidence>
<evidence type="ECO:0000255" key="6">
    <source>
        <dbReference type="PROSITE-ProRule" id="PRU00114"/>
    </source>
</evidence>
<evidence type="ECO:0000255" key="7">
    <source>
        <dbReference type="PROSITE-ProRule" id="PRU00302"/>
    </source>
</evidence>
<evidence type="ECO:0000255" key="8">
    <source>
        <dbReference type="PROSITE-ProRule" id="PRU00323"/>
    </source>
</evidence>
<evidence type="ECO:0000256" key="9">
    <source>
        <dbReference type="SAM" id="MobiDB-lite"/>
    </source>
</evidence>
<evidence type="ECO:0000269" key="10">
    <source>
    </source>
</evidence>
<evidence type="ECO:0000269" key="11">
    <source>
    </source>
</evidence>
<evidence type="ECO:0000303" key="12">
    <source>
    </source>
</evidence>
<evidence type="ECO:0000303" key="13">
    <source>
    </source>
</evidence>
<evidence type="ECO:0000305" key="14"/>
<feature type="signal peptide" evidence="3">
    <location>
        <begin position="1"/>
        <end position="16"/>
    </location>
</feature>
<feature type="chain" id="PRO_0000017504" description="Aggrecan core protein">
    <location>
        <begin position="17"/>
        <end position="2109"/>
    </location>
</feature>
<feature type="domain" description="Ig-like V-type">
    <location>
        <begin position="34"/>
        <end position="143"/>
    </location>
</feature>
<feature type="domain" description="Link 1" evidence="8">
    <location>
        <begin position="149"/>
        <end position="244"/>
    </location>
</feature>
<feature type="domain" description="Link 2" evidence="8">
    <location>
        <begin position="250"/>
        <end position="347"/>
    </location>
</feature>
<feature type="domain" description="Link 3" evidence="8">
    <location>
        <begin position="520"/>
        <end position="615"/>
    </location>
</feature>
<feature type="domain" description="Link 4" evidence="8">
    <location>
        <begin position="621"/>
        <end position="717"/>
    </location>
</feature>
<feature type="repeat" description="1">
    <location>
        <begin position="1363"/>
        <end position="1382"/>
    </location>
</feature>
<feature type="repeat" description="2">
    <location>
        <begin position="1383"/>
        <end position="1402"/>
    </location>
</feature>
<feature type="repeat" description="3">
    <location>
        <begin position="1403"/>
        <end position="1422"/>
    </location>
</feature>
<feature type="repeat" description="4">
    <location>
        <begin position="1423"/>
        <end position="1442"/>
    </location>
</feature>
<feature type="repeat" description="5">
    <location>
        <begin position="1443"/>
        <end position="1462"/>
    </location>
</feature>
<feature type="repeat" description="6">
    <location>
        <begin position="1463"/>
        <end position="1482"/>
    </location>
</feature>
<feature type="repeat" description="7">
    <location>
        <begin position="1483"/>
        <end position="1502"/>
    </location>
</feature>
<feature type="repeat" description="8">
    <location>
        <begin position="1503"/>
        <end position="1522"/>
    </location>
</feature>
<feature type="repeat" description="9">
    <location>
        <begin position="1523"/>
        <end position="1542"/>
    </location>
</feature>
<feature type="repeat" description="10">
    <location>
        <begin position="1543"/>
        <end position="1562"/>
    </location>
</feature>
<feature type="repeat" description="11">
    <location>
        <begin position="1563"/>
        <end position="1582"/>
    </location>
</feature>
<feature type="repeat" description="12">
    <location>
        <begin position="1583"/>
        <end position="1602"/>
    </location>
</feature>
<feature type="repeat" description="13">
    <location>
        <begin position="1603"/>
        <end position="1622"/>
    </location>
</feature>
<feature type="repeat" description="14">
    <location>
        <begin position="1623"/>
        <end position="1642"/>
    </location>
</feature>
<feature type="repeat" description="15">
    <location>
        <begin position="1643"/>
        <end position="1662"/>
    </location>
</feature>
<feature type="repeat" description="16">
    <location>
        <begin position="1663"/>
        <end position="1682"/>
    </location>
</feature>
<feature type="repeat" description="17">
    <location>
        <begin position="1683"/>
        <end position="1702"/>
    </location>
</feature>
<feature type="repeat" description="18">
    <location>
        <begin position="1703"/>
        <end position="1722"/>
    </location>
</feature>
<feature type="repeat" description="19">
    <location>
        <begin position="1723"/>
        <end position="1742"/>
    </location>
</feature>
<feature type="domain" description="EGF-like" evidence="5">
    <location>
        <begin position="1855"/>
        <end position="1892"/>
    </location>
</feature>
<feature type="domain" description="C-type lectin" evidence="4">
    <location>
        <begin position="1901"/>
        <end position="2019"/>
    </location>
</feature>
<feature type="domain" description="Sushi" evidence="7">
    <location>
        <begin position="2022"/>
        <end position="2082"/>
    </location>
</feature>
<feature type="region of interest" description="G1-A">
    <location>
        <begin position="48"/>
        <end position="137"/>
    </location>
</feature>
<feature type="region of interest" description="G1-B">
    <location>
        <begin position="148"/>
        <end position="243"/>
    </location>
</feature>
<feature type="region of interest" description="G1-B'">
    <location>
        <begin position="249"/>
        <end position="346"/>
    </location>
</feature>
<feature type="region of interest" description="G2-B">
    <location>
        <begin position="519"/>
        <end position="613"/>
    </location>
</feature>
<feature type="region of interest" description="G2-B'">
    <location>
        <begin position="620"/>
        <end position="715"/>
    </location>
</feature>
<feature type="region of interest" description="KS">
    <location>
        <begin position="718"/>
        <end position="803"/>
    </location>
</feature>
<feature type="region of interest" description="Disordered" evidence="9">
    <location>
        <begin position="743"/>
        <end position="771"/>
    </location>
</feature>
<feature type="region of interest" description="Disordered" evidence="9">
    <location>
        <begin position="788"/>
        <end position="878"/>
    </location>
</feature>
<feature type="region of interest" description="CS-1">
    <location>
        <begin position="805"/>
        <end position="1264"/>
    </location>
</feature>
<feature type="region of interest" description="Disordered" evidence="9">
    <location>
        <begin position="904"/>
        <end position="940"/>
    </location>
</feature>
<feature type="region of interest" description="Disordered" evidence="9">
    <location>
        <begin position="963"/>
        <end position="1101"/>
    </location>
</feature>
<feature type="region of interest" description="Disordered" evidence="9">
    <location>
        <begin position="1177"/>
        <end position="1203"/>
    </location>
</feature>
<feature type="region of interest" description="Disordered" evidence="9">
    <location>
        <begin position="1247"/>
        <end position="1267"/>
    </location>
</feature>
<feature type="region of interest" description="CS-2">
    <location>
        <begin position="1265"/>
        <end position="1742"/>
    </location>
</feature>
<feature type="region of interest" description="19 X 20 AA tandem repeats of E-[TA]-S-T-[ADHIFSRVT]-[YQLRH]-E-[IVTAG]-[SR]-[GS]-E-[SAT]-[SP]-[AG]-[FYL]-P-[EA]-[TIV]-[SRTG]-[IVT]">
    <location>
        <begin position="1363"/>
        <end position="1742"/>
    </location>
</feature>
<feature type="region of interest" description="Disordered" evidence="9">
    <location>
        <begin position="1371"/>
        <end position="1392"/>
    </location>
</feature>
<feature type="region of interest" description="Disordered" evidence="9">
    <location>
        <begin position="1645"/>
        <end position="1716"/>
    </location>
</feature>
<feature type="region of interest" description="Disordered" evidence="9">
    <location>
        <begin position="1746"/>
        <end position="1820"/>
    </location>
</feature>
<feature type="region of interest" description="G3">
    <location>
        <begin position="1893"/>
        <end position="2109"/>
    </location>
</feature>
<feature type="compositionally biased region" description="Low complexity" evidence="9">
    <location>
        <begin position="1177"/>
        <end position="1189"/>
    </location>
</feature>
<feature type="compositionally biased region" description="Polar residues" evidence="9">
    <location>
        <begin position="1371"/>
        <end position="1389"/>
    </location>
</feature>
<feature type="compositionally biased region" description="Polar residues" evidence="9">
    <location>
        <begin position="1683"/>
        <end position="1694"/>
    </location>
</feature>
<feature type="compositionally biased region" description="Polar residues" evidence="9">
    <location>
        <begin position="1764"/>
        <end position="1777"/>
    </location>
</feature>
<feature type="binding site" evidence="1">
    <location>
        <position position="1958"/>
    </location>
    <ligand>
        <name>Ca(2+)</name>
        <dbReference type="ChEBI" id="CHEBI:29108"/>
        <label>1</label>
    </ligand>
</feature>
<feature type="binding site" evidence="1">
    <location>
        <position position="1962"/>
    </location>
    <ligand>
        <name>Ca(2+)</name>
        <dbReference type="ChEBI" id="CHEBI:29108"/>
        <label>1</label>
    </ligand>
</feature>
<feature type="binding site" evidence="1">
    <location>
        <position position="1982"/>
    </location>
    <ligand>
        <name>Ca(2+)</name>
        <dbReference type="ChEBI" id="CHEBI:29108"/>
        <label>2</label>
    </ligand>
</feature>
<feature type="binding site" evidence="1">
    <location>
        <position position="1984"/>
    </location>
    <ligand>
        <name>Ca(2+)</name>
        <dbReference type="ChEBI" id="CHEBI:29108"/>
        <label>2</label>
    </ligand>
</feature>
<feature type="binding site" evidence="1">
    <location>
        <position position="1985"/>
    </location>
    <ligand>
        <name>Ca(2+)</name>
        <dbReference type="ChEBI" id="CHEBI:29108"/>
        <label>1</label>
    </ligand>
</feature>
<feature type="binding site" evidence="1">
    <location>
        <position position="1991"/>
    </location>
    <ligand>
        <name>Ca(2+)</name>
        <dbReference type="ChEBI" id="CHEBI:29108"/>
        <label>1</label>
    </ligand>
</feature>
<feature type="binding site" evidence="1">
    <location>
        <position position="1991"/>
    </location>
    <ligand>
        <name>Ca(2+)</name>
        <dbReference type="ChEBI" id="CHEBI:29108"/>
        <label>2</label>
    </ligand>
</feature>
<feature type="binding site" evidence="1">
    <location>
        <position position="1992"/>
    </location>
    <ligand>
        <name>Ca(2+)</name>
        <dbReference type="ChEBI" id="CHEBI:29108"/>
        <label>1</label>
    </ligand>
</feature>
<feature type="binding site" evidence="1">
    <location>
        <position position="2005"/>
    </location>
    <ligand>
        <name>Ca(2+)</name>
        <dbReference type="ChEBI" id="CHEBI:29108"/>
        <label>2</label>
    </ligand>
</feature>
<feature type="binding site" evidence="1">
    <location>
        <position position="2006"/>
    </location>
    <ligand>
        <name>Ca(2+)</name>
        <dbReference type="ChEBI" id="CHEBI:29108"/>
        <label>2</label>
    </ligand>
</feature>
<feature type="glycosylation site" description="N-linked (GlcNAc...) asparagine" evidence="3">
    <location>
        <position position="76"/>
    </location>
</feature>
<feature type="glycosylation site" description="N-linked (GlcNAc...) asparagine" evidence="3">
    <location>
        <position position="122"/>
    </location>
</feature>
<feature type="glycosylation site" description="N-linked (GlcNAc...) asparagine" evidence="3">
    <location>
        <position position="330"/>
    </location>
</feature>
<feature type="glycosylation site" description="N-linked (GlcNAc...) asparagine" evidence="3">
    <location>
        <position position="388"/>
    </location>
</feature>
<feature type="glycosylation site" description="N-linked (GlcNAc...) asparagine" evidence="3">
    <location>
        <position position="439"/>
    </location>
</feature>
<feature type="glycosylation site" description="N-linked (GlcNAc...) asparagine" evidence="3">
    <location>
        <position position="644"/>
    </location>
</feature>
<feature type="glycosylation site" description="N-linked (GlcNAc...) asparagine" evidence="3">
    <location>
        <position position="700"/>
    </location>
</feature>
<feature type="glycosylation site" description="O-linked (Xyl...) (keratan sulfate) threonine" evidence="11">
    <location>
        <position position="728"/>
    </location>
</feature>
<feature type="glycosylation site" description="N-linked (GlcNAc...) asparagine" evidence="3">
    <location>
        <position position="765"/>
    </location>
</feature>
<feature type="glycosylation site" description="N-linked (GlcNAc...) asparagine" evidence="3">
    <location>
        <position position="801"/>
    </location>
</feature>
<feature type="glycosylation site" description="O-linked (Xyl...) (chondroitin sulfate) serine" evidence="3">
    <location>
        <position position="907"/>
    </location>
</feature>
<feature type="glycosylation site" description="O-linked (Xyl...) (chondroitin sulfate) serine" evidence="3">
    <location>
        <position position="911"/>
    </location>
</feature>
<feature type="glycosylation site" description="O-linked (Xyl...) (chondroitin sulfate) serine" evidence="2">
    <location>
        <position position="994"/>
    </location>
</feature>
<feature type="glycosylation site" description="O-linked (Xyl...) (chondroitin sulfate) serine" evidence="11">
    <location>
        <position position="1006"/>
    </location>
</feature>
<feature type="glycosylation site" description="O-linked (Xyl...) (chondroitin sulfate) serine" evidence="11">
    <location>
        <position position="1010"/>
    </location>
</feature>
<feature type="glycosylation site" description="O-linked (Xyl...) (chondroitin sulfate) serine" evidence="11">
    <location>
        <position position="1016"/>
    </location>
</feature>
<feature type="glycosylation site" description="O-linked (Xyl...) (chondroitin sulfate) serine" evidence="14">
    <location>
        <position position="1020"/>
    </location>
</feature>
<feature type="glycosylation site" description="O-linked (Xyl...) (chondroitin sulfate) serine" evidence="11">
    <location>
        <position position="1249"/>
    </location>
</feature>
<feature type="glycosylation site" description="O-linked (Xyl...) (chondroitin sulfate) serine" evidence="11">
    <location>
        <position position="1253"/>
    </location>
</feature>
<feature type="glycosylation site" description="O-linked (Xyl...) (chondroitin sulfate) serine" evidence="11">
    <location>
        <position position="1259"/>
    </location>
</feature>
<feature type="glycosylation site" description="O-linked (Xyl...) (chondroitin sulfate) serine" evidence="11">
    <location>
        <position position="1263"/>
    </location>
</feature>
<feature type="glycosylation site" description="O-linked (Xyl...) (chondroitin sulfate) serine" evidence="11">
    <location>
        <position position="1269"/>
    </location>
</feature>
<feature type="glycosylation site" description="O-linked (Xyl...) (chondroitin sulfate) serine" evidence="14">
    <location>
        <position position="1273"/>
    </location>
</feature>
<feature type="disulfide bond" evidence="6">
    <location>
        <begin position="51"/>
        <end position="129"/>
    </location>
</feature>
<feature type="disulfide bond" evidence="8">
    <location>
        <begin position="171"/>
        <end position="242"/>
    </location>
</feature>
<feature type="disulfide bond" evidence="8">
    <location>
        <begin position="195"/>
        <end position="216"/>
    </location>
</feature>
<feature type="disulfide bond" evidence="8">
    <location>
        <begin position="269"/>
        <end position="345"/>
    </location>
</feature>
<feature type="disulfide bond" evidence="8">
    <location>
        <begin position="293"/>
        <end position="314"/>
    </location>
</feature>
<feature type="disulfide bond" evidence="8">
    <location>
        <begin position="542"/>
        <end position="613"/>
    </location>
</feature>
<feature type="disulfide bond" evidence="8">
    <location>
        <begin position="566"/>
        <end position="587"/>
    </location>
</feature>
<feature type="disulfide bond" evidence="8">
    <location>
        <begin position="640"/>
        <end position="715"/>
    </location>
</feature>
<feature type="disulfide bond" evidence="8">
    <location>
        <begin position="664"/>
        <end position="685"/>
    </location>
</feature>
<feature type="disulfide bond" evidence="5">
    <location>
        <begin position="1859"/>
        <end position="1870"/>
    </location>
</feature>
<feature type="disulfide bond" evidence="5">
    <location>
        <begin position="1864"/>
        <end position="1879"/>
    </location>
</feature>
<feature type="disulfide bond" evidence="5">
    <location>
        <begin position="1881"/>
        <end position="1890"/>
    </location>
</feature>
<feature type="disulfide bond" evidence="4">
    <location>
        <begin position="1925"/>
        <end position="2017"/>
    </location>
</feature>
<feature type="disulfide bond" evidence="4">
    <location>
        <begin position="1993"/>
        <end position="2009"/>
    </location>
</feature>
<feature type="disulfide bond" evidence="7">
    <location>
        <begin position="2024"/>
        <end position="2067"/>
    </location>
</feature>
<feature type="disulfide bond" evidence="7">
    <location>
        <begin position="2053"/>
        <end position="2080"/>
    </location>
</feature>
<feature type="splice variant" id="VSP_003073" description="In isoform 2." evidence="12 13">
    <location>
        <begin position="1856"/>
        <end position="1892"/>
    </location>
</feature>
<feature type="sequence conflict" description="In Ref. 2." evidence="14" ref="2">
    <original>E</original>
    <variation>D</variation>
    <location>
        <position position="362"/>
    </location>
</feature>
<feature type="sequence conflict" description="In Ref. 2." evidence="14" ref="2">
    <original>G</original>
    <variation>D</variation>
    <location>
        <position position="601"/>
    </location>
</feature>
<feature type="sequence conflict" description="In Ref. 2; M88101." evidence="14" ref="2">
    <original>P</original>
    <variation>R</variation>
    <location>
        <position position="1000"/>
    </location>
</feature>
<feature type="sequence conflict" description="In Ref. 2; M88101." evidence="14" ref="2">
    <original>A</original>
    <variation>P</variation>
    <location>
        <position position="1029"/>
    </location>
</feature>
<feature type="sequence conflict" description="In Ref. 4; AAA48731." evidence="14" ref="4">
    <original>VT</original>
    <variation>PA</variation>
    <location>
        <begin position="1042"/>
        <end position="1043"/>
    </location>
</feature>
<feature type="sequence conflict" description="In Ref. 2 and 8." evidence="14" ref="2 8">
    <original>E</original>
    <variation>D</variation>
    <location>
        <position position="1251"/>
    </location>
</feature>
<feature type="sequence conflict" description="In Ref. 5; AAC60751." evidence="14" ref="5">
    <original>I</original>
    <variation>T</variation>
    <location>
        <position position="1587"/>
    </location>
</feature>
<feature type="sequence conflict" description="In Ref. 5; AAC60751." evidence="14" ref="5">
    <original>I</original>
    <variation>V</variation>
    <location>
        <position position="1590"/>
    </location>
</feature>
<feature type="sequence conflict" description="In Ref. 5; AAC60751." evidence="14" ref="5">
    <original>T</original>
    <variation>S</variation>
    <location>
        <position position="1594"/>
    </location>
</feature>
<feature type="sequence conflict" description="In Ref. 5; AAC60751." evidence="14" ref="5">
    <original>IETSTVREI</original>
    <variation>VLCRCSVLR</variation>
    <location>
        <begin position="1602"/>
        <end position="1610"/>
    </location>
</feature>
<feature type="sequence conflict" description="In Ref. 2; M88101." evidence="14" ref="2">
    <original>E</original>
    <variation>A</variation>
    <location>
        <position position="1603"/>
    </location>
</feature>
<feature type="sequence conflict" description="In Ref. 2; M88101." evidence="14" ref="2">
    <original>S</original>
    <variation>G</variation>
    <location>
        <position position="1672"/>
    </location>
</feature>
<feature type="sequence conflict" description="In Ref. 2 and 6; AAA48720." evidence="14" ref="2 6">
    <original>E</original>
    <variation>G</variation>
    <location>
        <position position="1796"/>
    </location>
</feature>
<feature type="sequence conflict" description="In Ref. 7; AAA48719." evidence="14" ref="7">
    <original>F</original>
    <variation>S</variation>
    <location>
        <position position="1988"/>
    </location>
</feature>